<sequence length="200" mass="21977">MAAGKARIGHLAPGFTAKAVMPDGQFKDISMSDYRGKYVVFFFYPLDFTFVCPTEIIAFSDAAEEFRKIGCEVIGASVDSHFCHLAWTNTPRKHGGLGAMKIPLVADTMRSISTDYGVFEGGMRASPTGGLFIIDDKGVLRQITINDLPVGRCVDEILRLVQAFQFTDKHGEVCPAGWKPGSDTIKPDVQKSKDFFSKQQ</sequence>
<proteinExistence type="evidence at transcript level"/>
<protein>
    <recommendedName>
        <fullName>Peroxiredoxin</fullName>
        <ecNumber evidence="1">1.11.1.24</ecNumber>
    </recommendedName>
    <alternativeName>
        <fullName>Natural killer enhancement factor-like protein</fullName>
    </alternativeName>
    <alternativeName>
        <fullName>RBT-NKEF</fullName>
    </alternativeName>
    <alternativeName>
        <fullName>Thioredoxin peroxidase</fullName>
    </alternativeName>
    <alternativeName>
        <fullName>Thioredoxin-dependent peroxide reductase</fullName>
    </alternativeName>
    <alternativeName>
        <fullName evidence="3">Thioredoxin-dependent peroxiredoxin</fullName>
    </alternativeName>
</protein>
<keyword id="KW-0049">Antioxidant</keyword>
<keyword id="KW-1015">Disulfide bond</keyword>
<keyword id="KW-0560">Oxidoreductase</keyword>
<keyword id="KW-0575">Peroxidase</keyword>
<keyword id="KW-0676">Redox-active center</keyword>
<name>TDX_ONCMY</name>
<reference key="1">
    <citation type="journal article" date="1995" name="Immunogenetics">
        <title>Natural killer cell enhancement factor-like gene in rainbow trout (Oncorhynchus mykiss).</title>
        <authorList>
            <person name="Mourich D.V."/>
            <person name="Hansen J."/>
            <person name="Leong J.-A."/>
        </authorList>
    </citation>
    <scope>NUCLEOTIDE SEQUENCE [MRNA]</scope>
    <source>
        <strain>Shasta</strain>
    </source>
</reference>
<evidence type="ECO:0000250" key="1">
    <source>
        <dbReference type="UniProtKB" id="Q06830"/>
    </source>
</evidence>
<evidence type="ECO:0000255" key="2">
    <source>
        <dbReference type="PROSITE-ProRule" id="PRU00691"/>
    </source>
</evidence>
<evidence type="ECO:0000305" key="3"/>
<accession>Q91191</accession>
<comment type="function">
    <text evidence="1">Thiol-specific peroxidase that catalyzes the reduction of hydrogen peroxide and organic hydroperoxides to water and alcohols, respectively. Plays a role in cell protection against oxidative stress by detoxifying peroxides and as sensor of hydrogen peroxide-mediated signaling events.</text>
</comment>
<comment type="catalytic activity">
    <reaction evidence="1">
        <text>a hydroperoxide + [thioredoxin]-dithiol = an alcohol + [thioredoxin]-disulfide + H2O</text>
        <dbReference type="Rhea" id="RHEA:62620"/>
        <dbReference type="Rhea" id="RHEA-COMP:10698"/>
        <dbReference type="Rhea" id="RHEA-COMP:10700"/>
        <dbReference type="ChEBI" id="CHEBI:15377"/>
        <dbReference type="ChEBI" id="CHEBI:29950"/>
        <dbReference type="ChEBI" id="CHEBI:30879"/>
        <dbReference type="ChEBI" id="CHEBI:35924"/>
        <dbReference type="ChEBI" id="CHEBI:50058"/>
        <dbReference type="EC" id="1.11.1.24"/>
    </reaction>
</comment>
<comment type="subunit">
    <text evidence="1">Homodimer; disulfide-linked, upon oxidation.</text>
</comment>
<comment type="miscellaneous">
    <text evidence="1">The active site is a conserved redox-active cysteine residue, the peroxidatic cysteine (C(P)), which makes the nucleophilic attack on the peroxide substrate. The peroxide oxidizes the C(P)-SH to cysteine sulfenic acid (C(P)-SOH), which then reacts with another cysteine residue, the resolving cysteine (C(R)), to form a disulfide bridge. The disulfide is subsequently reduced by an appropriate electron donor to complete the catalytic cycle. In this typical 2-Cys peroxiredoxin, C(R) is provided by the other dimeric subunit to form an intersubunit disulfide. The disulfide is subsequently reduced by thioredoxin.</text>
</comment>
<comment type="similarity">
    <text evidence="3">Belongs to the peroxiredoxin family. AhpC/Prx1 subfamily.</text>
</comment>
<organism>
    <name type="scientific">Oncorhynchus mykiss</name>
    <name type="common">Rainbow trout</name>
    <name type="synonym">Salmo gairdneri</name>
    <dbReference type="NCBI Taxonomy" id="8022"/>
    <lineage>
        <taxon>Eukaryota</taxon>
        <taxon>Metazoa</taxon>
        <taxon>Chordata</taxon>
        <taxon>Craniata</taxon>
        <taxon>Vertebrata</taxon>
        <taxon>Euteleostomi</taxon>
        <taxon>Actinopterygii</taxon>
        <taxon>Neopterygii</taxon>
        <taxon>Teleostei</taxon>
        <taxon>Protacanthopterygii</taxon>
        <taxon>Salmoniformes</taxon>
        <taxon>Salmonidae</taxon>
        <taxon>Salmoninae</taxon>
        <taxon>Oncorhynchus</taxon>
    </lineage>
</organism>
<feature type="chain" id="PRO_0000135087" description="Peroxiredoxin">
    <location>
        <begin position="1"/>
        <end position="200"/>
    </location>
</feature>
<feature type="domain" description="Thioredoxin" evidence="2">
    <location>
        <begin position="6"/>
        <end position="166"/>
    </location>
</feature>
<feature type="active site" description="Cysteine sulfenic acid (-SOH) intermediate" evidence="1">
    <location>
        <position position="52"/>
    </location>
</feature>
<feature type="disulfide bond" description="Interchain (with C-174); in linked form" evidence="1">
    <location>
        <position position="52"/>
    </location>
</feature>
<feature type="disulfide bond" description="Interchain (with C-52); in linked form" evidence="1">
    <location>
        <position position="174"/>
    </location>
</feature>
<dbReference type="EC" id="1.11.1.24" evidence="1"/>
<dbReference type="EMBL" id="U27125">
    <property type="protein sequence ID" value="AAA91319.1"/>
    <property type="molecule type" value="mRNA"/>
</dbReference>
<dbReference type="SMR" id="Q91191"/>
<dbReference type="Proteomes" id="UP000694395">
    <property type="component" value="Unplaced"/>
</dbReference>
<dbReference type="GO" id="GO:0005829">
    <property type="term" value="C:cytosol"/>
    <property type="evidence" value="ECO:0007669"/>
    <property type="project" value="TreeGrafter"/>
</dbReference>
<dbReference type="GO" id="GO:0008379">
    <property type="term" value="F:thioredoxin peroxidase activity"/>
    <property type="evidence" value="ECO:0007669"/>
    <property type="project" value="TreeGrafter"/>
</dbReference>
<dbReference type="GO" id="GO:0045454">
    <property type="term" value="P:cell redox homeostasis"/>
    <property type="evidence" value="ECO:0007669"/>
    <property type="project" value="TreeGrafter"/>
</dbReference>
<dbReference type="GO" id="GO:0042744">
    <property type="term" value="P:hydrogen peroxide catabolic process"/>
    <property type="evidence" value="ECO:0007669"/>
    <property type="project" value="TreeGrafter"/>
</dbReference>
<dbReference type="GO" id="GO:0045321">
    <property type="term" value="P:leukocyte activation"/>
    <property type="evidence" value="ECO:0007669"/>
    <property type="project" value="TreeGrafter"/>
</dbReference>
<dbReference type="GO" id="GO:0019430">
    <property type="term" value="P:removal of superoxide radicals"/>
    <property type="evidence" value="ECO:0007669"/>
    <property type="project" value="TreeGrafter"/>
</dbReference>
<dbReference type="CDD" id="cd03015">
    <property type="entry name" value="PRX_Typ2cys"/>
    <property type="match status" value="1"/>
</dbReference>
<dbReference type="FunFam" id="3.40.30.10:FF:000003">
    <property type="entry name" value="Peroxiredoxin 1"/>
    <property type="match status" value="1"/>
</dbReference>
<dbReference type="Gene3D" id="3.40.30.10">
    <property type="entry name" value="Glutaredoxin"/>
    <property type="match status" value="1"/>
</dbReference>
<dbReference type="InterPro" id="IPR000866">
    <property type="entry name" value="AhpC/TSA"/>
</dbReference>
<dbReference type="InterPro" id="IPR050217">
    <property type="entry name" value="Peroxiredoxin"/>
</dbReference>
<dbReference type="InterPro" id="IPR024706">
    <property type="entry name" value="Peroxiredoxin_AhpC-typ"/>
</dbReference>
<dbReference type="InterPro" id="IPR019479">
    <property type="entry name" value="Peroxiredoxin_C"/>
</dbReference>
<dbReference type="InterPro" id="IPR036249">
    <property type="entry name" value="Thioredoxin-like_sf"/>
</dbReference>
<dbReference type="InterPro" id="IPR013766">
    <property type="entry name" value="Thioredoxin_domain"/>
</dbReference>
<dbReference type="PANTHER" id="PTHR10681:SF111">
    <property type="entry name" value="PEROXIREDOXIN-1"/>
    <property type="match status" value="1"/>
</dbReference>
<dbReference type="PANTHER" id="PTHR10681">
    <property type="entry name" value="THIOREDOXIN PEROXIDASE"/>
    <property type="match status" value="1"/>
</dbReference>
<dbReference type="Pfam" id="PF10417">
    <property type="entry name" value="1-cysPrx_C"/>
    <property type="match status" value="1"/>
</dbReference>
<dbReference type="Pfam" id="PF00578">
    <property type="entry name" value="AhpC-TSA"/>
    <property type="match status" value="1"/>
</dbReference>
<dbReference type="PIRSF" id="PIRSF000239">
    <property type="entry name" value="AHPC"/>
    <property type="match status" value="1"/>
</dbReference>
<dbReference type="SUPFAM" id="SSF52833">
    <property type="entry name" value="Thioredoxin-like"/>
    <property type="match status" value="1"/>
</dbReference>
<dbReference type="PROSITE" id="PS51352">
    <property type="entry name" value="THIOREDOXIN_2"/>
    <property type="match status" value="1"/>
</dbReference>